<gene>
    <name type="primary">MED28</name>
    <name type="synonym">Med23</name>
    <name type="ORF">CG5121</name>
</gene>
<organism>
    <name type="scientific">Drosophila melanogaster</name>
    <name type="common">Fruit fly</name>
    <dbReference type="NCBI Taxonomy" id="7227"/>
    <lineage>
        <taxon>Eukaryota</taxon>
        <taxon>Metazoa</taxon>
        <taxon>Ecdysozoa</taxon>
        <taxon>Arthropoda</taxon>
        <taxon>Hexapoda</taxon>
        <taxon>Insecta</taxon>
        <taxon>Pterygota</taxon>
        <taxon>Neoptera</taxon>
        <taxon>Endopterygota</taxon>
        <taxon>Diptera</taxon>
        <taxon>Brachycera</taxon>
        <taxon>Muscomorpha</taxon>
        <taxon>Ephydroidea</taxon>
        <taxon>Drosophilidae</taxon>
        <taxon>Drosophila</taxon>
        <taxon>Sophophora</taxon>
    </lineage>
</organism>
<accession>Q9VBQ9</accession>
<sequence length="189" mass="21079">MASNESGGGNLMDEFEEAFQSCLLTLTKQEPNSGTNKEEIDLEVQKTTNRFIDVARQMEAFFLQKRFLVSTLKPYMLIKDENQDLSIEIQRKEALLQKHYNRLEEWKACLSDIQQGVHSRPTPPIGSGMLQGPGGGMPPMGGTPPRPGMMPGMPPGAMQPGGPMQPSPHMLQAQQMQQLRMISRQMPPK</sequence>
<keyword id="KW-0010">Activator</keyword>
<keyword id="KW-0175">Coiled coil</keyword>
<keyword id="KW-0539">Nucleus</keyword>
<keyword id="KW-1185">Reference proteome</keyword>
<keyword id="KW-0804">Transcription</keyword>
<keyword id="KW-0805">Transcription regulation</keyword>
<protein>
    <recommendedName>
        <fullName>Mediator of RNA polymerase II transcription subunit 28</fullName>
    </recommendedName>
    <alternativeName>
        <fullName>Mediator complex subunit 28</fullName>
    </alternativeName>
    <alternativeName>
        <fullName>dMED23</fullName>
    </alternativeName>
</protein>
<dbReference type="EMBL" id="AE014297">
    <property type="protein sequence ID" value="AAF56470.1"/>
    <property type="molecule type" value="Genomic_DNA"/>
</dbReference>
<dbReference type="EMBL" id="AY118876">
    <property type="protein sequence ID" value="AAM50736.1"/>
    <property type="molecule type" value="mRNA"/>
</dbReference>
<dbReference type="RefSeq" id="NP_651397.1">
    <property type="nucleotide sequence ID" value="NM_143140.1"/>
</dbReference>
<dbReference type="SMR" id="Q9VBQ9"/>
<dbReference type="BioGRID" id="67993">
    <property type="interactions" value="14"/>
</dbReference>
<dbReference type="ComplexPortal" id="CPX-2308">
    <property type="entry name" value="Core mediator complex"/>
</dbReference>
<dbReference type="DIP" id="DIP-19819N"/>
<dbReference type="FunCoup" id="Q9VBQ9">
    <property type="interactions" value="2047"/>
</dbReference>
<dbReference type="IntAct" id="Q9VBQ9">
    <property type="interactions" value="12"/>
</dbReference>
<dbReference type="STRING" id="7227.FBpp0084211"/>
<dbReference type="PaxDb" id="7227-FBpp0084211"/>
<dbReference type="DNASU" id="43079"/>
<dbReference type="EnsemblMetazoa" id="FBtr0084836">
    <property type="protein sequence ID" value="FBpp0084211"/>
    <property type="gene ID" value="FBgn0039337"/>
</dbReference>
<dbReference type="GeneID" id="43079"/>
<dbReference type="KEGG" id="dme:Dmel_CG5121"/>
<dbReference type="AGR" id="FB:FBgn0039337"/>
<dbReference type="CTD" id="80306"/>
<dbReference type="FlyBase" id="FBgn0039337">
    <property type="gene designation" value="MED28"/>
</dbReference>
<dbReference type="VEuPathDB" id="VectorBase:FBgn0039337"/>
<dbReference type="eggNOG" id="ENOG502QSN9">
    <property type="taxonomic scope" value="Eukaryota"/>
</dbReference>
<dbReference type="GeneTree" id="ENSGT00390000006192"/>
<dbReference type="HOGENOM" id="CLU_088358_0_0_1"/>
<dbReference type="InParanoid" id="Q9VBQ9"/>
<dbReference type="OMA" id="MQPSPQH"/>
<dbReference type="OrthoDB" id="2286203at2759"/>
<dbReference type="PhylomeDB" id="Q9VBQ9"/>
<dbReference type="BioGRID-ORCS" id="43079">
    <property type="hits" value="1 hit in 1 CRISPR screen"/>
</dbReference>
<dbReference type="GenomeRNAi" id="43079"/>
<dbReference type="PRO" id="PR:Q9VBQ9"/>
<dbReference type="Proteomes" id="UP000000803">
    <property type="component" value="Chromosome 3R"/>
</dbReference>
<dbReference type="Bgee" id="FBgn0039337">
    <property type="expression patterns" value="Expressed in T neuron T4b (Drosophila) in embryonic/larval optic lobe (Drosophila) and 80 other cell types or tissues"/>
</dbReference>
<dbReference type="GO" id="GO:0016592">
    <property type="term" value="C:mediator complex"/>
    <property type="evidence" value="ECO:0000314"/>
    <property type="project" value="FlyBase"/>
</dbReference>
<dbReference type="GO" id="GO:0005634">
    <property type="term" value="C:nucleus"/>
    <property type="evidence" value="ECO:0000314"/>
    <property type="project" value="FlyBase"/>
</dbReference>
<dbReference type="GO" id="GO:0003712">
    <property type="term" value="F:transcription coregulator activity"/>
    <property type="evidence" value="ECO:0000353"/>
    <property type="project" value="UniProtKB"/>
</dbReference>
<dbReference type="GO" id="GO:0006357">
    <property type="term" value="P:regulation of transcription by RNA polymerase II"/>
    <property type="evidence" value="ECO:0000353"/>
    <property type="project" value="UniProtKB"/>
</dbReference>
<dbReference type="InterPro" id="IPR021640">
    <property type="entry name" value="Mediator_Med28"/>
</dbReference>
<dbReference type="PANTHER" id="PTHR13512">
    <property type="entry name" value="MEDIATOR COMPLEX SUBUNIT 28"/>
    <property type="match status" value="1"/>
</dbReference>
<dbReference type="PANTHER" id="PTHR13512:SF2">
    <property type="entry name" value="MEDIATOR OF RNA POLYMERASE II TRANSCRIPTION SUBUNIT 28"/>
    <property type="match status" value="1"/>
</dbReference>
<dbReference type="Pfam" id="PF11594">
    <property type="entry name" value="Med28"/>
    <property type="match status" value="1"/>
</dbReference>
<proteinExistence type="evidence at protein level"/>
<evidence type="ECO:0000255" key="1"/>
<evidence type="ECO:0000256" key="2">
    <source>
        <dbReference type="SAM" id="MobiDB-lite"/>
    </source>
</evidence>
<evidence type="ECO:0000269" key="3">
    <source>
    </source>
</evidence>
<evidence type="ECO:0000305" key="4"/>
<name>MED28_DROME</name>
<feature type="chain" id="PRO_0000113984" description="Mediator of RNA polymerase II transcription subunit 28">
    <location>
        <begin position="1"/>
        <end position="189"/>
    </location>
</feature>
<feature type="region of interest" description="Disordered" evidence="2">
    <location>
        <begin position="124"/>
        <end position="147"/>
    </location>
</feature>
<feature type="coiled-coil region" evidence="1">
    <location>
        <begin position="75"/>
        <end position="115"/>
    </location>
</feature>
<feature type="compositionally biased region" description="Gly residues" evidence="2">
    <location>
        <begin position="129"/>
        <end position="139"/>
    </location>
</feature>
<comment type="function">
    <text evidence="3">Component of the Mediator complex, a coactivator involved in the regulated transcription of nearly all RNA polymerase II-dependent genes. Mediator functions as a bridge to convey information from gene-specific regulatory proteins to the basal RNA polymerase II transcription machinery. Mediator is recruited to promoters by direct interactions with regulatory proteins and serves as a scaffold for the assembly of a functional preinitiation complex with RNA polymerase II and the general transcription factors.</text>
</comment>
<comment type="subunit">
    <text evidence="3">Component of the Mediator complex, which includes at least CDK8, MED4, MED6, MED11, MED14, MED17, MED18, MED20, MED21, MED22, MED27, MED28, MED30 and MED31.</text>
</comment>
<comment type="subcellular location">
    <subcellularLocation>
        <location evidence="4">Nucleus</location>
    </subcellularLocation>
</comment>
<comment type="similarity">
    <text evidence="4">Belongs to the Mediator complex subunit 28 family.</text>
</comment>
<reference key="1">
    <citation type="journal article" date="2000" name="Science">
        <title>The genome sequence of Drosophila melanogaster.</title>
        <authorList>
            <person name="Adams M.D."/>
            <person name="Celniker S.E."/>
            <person name="Holt R.A."/>
            <person name="Evans C.A."/>
            <person name="Gocayne J.D."/>
            <person name="Amanatides P.G."/>
            <person name="Scherer S.E."/>
            <person name="Li P.W."/>
            <person name="Hoskins R.A."/>
            <person name="Galle R.F."/>
            <person name="George R.A."/>
            <person name="Lewis S.E."/>
            <person name="Richards S."/>
            <person name="Ashburner M."/>
            <person name="Henderson S.N."/>
            <person name="Sutton G.G."/>
            <person name="Wortman J.R."/>
            <person name="Yandell M.D."/>
            <person name="Zhang Q."/>
            <person name="Chen L.X."/>
            <person name="Brandon R.C."/>
            <person name="Rogers Y.-H.C."/>
            <person name="Blazej R.G."/>
            <person name="Champe M."/>
            <person name="Pfeiffer B.D."/>
            <person name="Wan K.H."/>
            <person name="Doyle C."/>
            <person name="Baxter E.G."/>
            <person name="Helt G."/>
            <person name="Nelson C.R."/>
            <person name="Miklos G.L.G."/>
            <person name="Abril J.F."/>
            <person name="Agbayani A."/>
            <person name="An H.-J."/>
            <person name="Andrews-Pfannkoch C."/>
            <person name="Baldwin D."/>
            <person name="Ballew R.M."/>
            <person name="Basu A."/>
            <person name="Baxendale J."/>
            <person name="Bayraktaroglu L."/>
            <person name="Beasley E.M."/>
            <person name="Beeson K.Y."/>
            <person name="Benos P.V."/>
            <person name="Berman B.P."/>
            <person name="Bhandari D."/>
            <person name="Bolshakov S."/>
            <person name="Borkova D."/>
            <person name="Botchan M.R."/>
            <person name="Bouck J."/>
            <person name="Brokstein P."/>
            <person name="Brottier P."/>
            <person name="Burtis K.C."/>
            <person name="Busam D.A."/>
            <person name="Butler H."/>
            <person name="Cadieu E."/>
            <person name="Center A."/>
            <person name="Chandra I."/>
            <person name="Cherry J.M."/>
            <person name="Cawley S."/>
            <person name="Dahlke C."/>
            <person name="Davenport L.B."/>
            <person name="Davies P."/>
            <person name="de Pablos B."/>
            <person name="Delcher A."/>
            <person name="Deng Z."/>
            <person name="Mays A.D."/>
            <person name="Dew I."/>
            <person name="Dietz S.M."/>
            <person name="Dodson K."/>
            <person name="Doup L.E."/>
            <person name="Downes M."/>
            <person name="Dugan-Rocha S."/>
            <person name="Dunkov B.C."/>
            <person name="Dunn P."/>
            <person name="Durbin K.J."/>
            <person name="Evangelista C.C."/>
            <person name="Ferraz C."/>
            <person name="Ferriera S."/>
            <person name="Fleischmann W."/>
            <person name="Fosler C."/>
            <person name="Gabrielian A.E."/>
            <person name="Garg N.S."/>
            <person name="Gelbart W.M."/>
            <person name="Glasser K."/>
            <person name="Glodek A."/>
            <person name="Gong F."/>
            <person name="Gorrell J.H."/>
            <person name="Gu Z."/>
            <person name="Guan P."/>
            <person name="Harris M."/>
            <person name="Harris N.L."/>
            <person name="Harvey D.A."/>
            <person name="Heiman T.J."/>
            <person name="Hernandez J.R."/>
            <person name="Houck J."/>
            <person name="Hostin D."/>
            <person name="Houston K.A."/>
            <person name="Howland T.J."/>
            <person name="Wei M.-H."/>
            <person name="Ibegwam C."/>
            <person name="Jalali M."/>
            <person name="Kalush F."/>
            <person name="Karpen G.H."/>
            <person name="Ke Z."/>
            <person name="Kennison J.A."/>
            <person name="Ketchum K.A."/>
            <person name="Kimmel B.E."/>
            <person name="Kodira C.D."/>
            <person name="Kraft C.L."/>
            <person name="Kravitz S."/>
            <person name="Kulp D."/>
            <person name="Lai Z."/>
            <person name="Lasko P."/>
            <person name="Lei Y."/>
            <person name="Levitsky A.A."/>
            <person name="Li J.H."/>
            <person name="Li Z."/>
            <person name="Liang Y."/>
            <person name="Lin X."/>
            <person name="Liu X."/>
            <person name="Mattei B."/>
            <person name="McIntosh T.C."/>
            <person name="McLeod M.P."/>
            <person name="McPherson D."/>
            <person name="Merkulov G."/>
            <person name="Milshina N.V."/>
            <person name="Mobarry C."/>
            <person name="Morris J."/>
            <person name="Moshrefi A."/>
            <person name="Mount S.M."/>
            <person name="Moy M."/>
            <person name="Murphy B."/>
            <person name="Murphy L."/>
            <person name="Muzny D.M."/>
            <person name="Nelson D.L."/>
            <person name="Nelson D.R."/>
            <person name="Nelson K.A."/>
            <person name="Nixon K."/>
            <person name="Nusskern D.R."/>
            <person name="Pacleb J.M."/>
            <person name="Palazzolo M."/>
            <person name="Pittman G.S."/>
            <person name="Pan S."/>
            <person name="Pollard J."/>
            <person name="Puri V."/>
            <person name="Reese M.G."/>
            <person name="Reinert K."/>
            <person name="Remington K."/>
            <person name="Saunders R.D.C."/>
            <person name="Scheeler F."/>
            <person name="Shen H."/>
            <person name="Shue B.C."/>
            <person name="Siden-Kiamos I."/>
            <person name="Simpson M."/>
            <person name="Skupski M.P."/>
            <person name="Smith T.J."/>
            <person name="Spier E."/>
            <person name="Spradling A.C."/>
            <person name="Stapleton M."/>
            <person name="Strong R."/>
            <person name="Sun E."/>
            <person name="Svirskas R."/>
            <person name="Tector C."/>
            <person name="Turner R."/>
            <person name="Venter E."/>
            <person name="Wang A.H."/>
            <person name="Wang X."/>
            <person name="Wang Z.-Y."/>
            <person name="Wassarman D.A."/>
            <person name="Weinstock G.M."/>
            <person name="Weissenbach J."/>
            <person name="Williams S.M."/>
            <person name="Woodage T."/>
            <person name="Worley K.C."/>
            <person name="Wu D."/>
            <person name="Yang S."/>
            <person name="Yao Q.A."/>
            <person name="Ye J."/>
            <person name="Yeh R.-F."/>
            <person name="Zaveri J.S."/>
            <person name="Zhan M."/>
            <person name="Zhang G."/>
            <person name="Zhao Q."/>
            <person name="Zheng L."/>
            <person name="Zheng X.H."/>
            <person name="Zhong F.N."/>
            <person name="Zhong W."/>
            <person name="Zhou X."/>
            <person name="Zhu S.C."/>
            <person name="Zhu X."/>
            <person name="Smith H.O."/>
            <person name="Gibbs R.A."/>
            <person name="Myers E.W."/>
            <person name="Rubin G.M."/>
            <person name="Venter J.C."/>
        </authorList>
    </citation>
    <scope>NUCLEOTIDE SEQUENCE [LARGE SCALE GENOMIC DNA]</scope>
    <source>
        <strain>Berkeley</strain>
    </source>
</reference>
<reference key="2">
    <citation type="journal article" date="2002" name="Genome Biol.">
        <title>Annotation of the Drosophila melanogaster euchromatic genome: a systematic review.</title>
        <authorList>
            <person name="Misra S."/>
            <person name="Crosby M.A."/>
            <person name="Mungall C.J."/>
            <person name="Matthews B.B."/>
            <person name="Campbell K.S."/>
            <person name="Hradecky P."/>
            <person name="Huang Y."/>
            <person name="Kaminker J.S."/>
            <person name="Millburn G.H."/>
            <person name="Prochnik S.E."/>
            <person name="Smith C.D."/>
            <person name="Tupy J.L."/>
            <person name="Whitfield E.J."/>
            <person name="Bayraktaroglu L."/>
            <person name="Berman B.P."/>
            <person name="Bettencourt B.R."/>
            <person name="Celniker S.E."/>
            <person name="de Grey A.D.N.J."/>
            <person name="Drysdale R.A."/>
            <person name="Harris N.L."/>
            <person name="Richter J."/>
            <person name="Russo S."/>
            <person name="Schroeder A.J."/>
            <person name="Shu S.Q."/>
            <person name="Stapleton M."/>
            <person name="Yamada C."/>
            <person name="Ashburner M."/>
            <person name="Gelbart W.M."/>
            <person name="Rubin G.M."/>
            <person name="Lewis S.E."/>
        </authorList>
    </citation>
    <scope>GENOME REANNOTATION</scope>
    <source>
        <strain>Berkeley</strain>
    </source>
</reference>
<reference key="3">
    <citation type="journal article" date="2002" name="Genome Biol.">
        <title>A Drosophila full-length cDNA resource.</title>
        <authorList>
            <person name="Stapleton M."/>
            <person name="Carlson J.W."/>
            <person name="Brokstein P."/>
            <person name="Yu C."/>
            <person name="Champe M."/>
            <person name="George R.A."/>
            <person name="Guarin H."/>
            <person name="Kronmiller B."/>
            <person name="Pacleb J.M."/>
            <person name="Park S."/>
            <person name="Wan K.H."/>
            <person name="Rubin G.M."/>
            <person name="Celniker S.E."/>
        </authorList>
    </citation>
    <scope>NUCLEOTIDE SEQUENCE [LARGE SCALE MRNA]</scope>
    <source>
        <strain>Berkeley</strain>
        <tissue>Ovary</tissue>
    </source>
</reference>
<reference key="4">
    <citation type="journal article" date="2002" name="J. Biol. Chem.">
        <title>Novel Mediator proteins of the small Mediator complex in Drosophila SL2 cells.</title>
        <authorList>
            <person name="Gu J.-Y."/>
            <person name="Park J.M."/>
            <person name="Song E.J."/>
            <person name="Mizuguchi G."/>
            <person name="Yoon J.H."/>
            <person name="Kim-Ha J."/>
            <person name="Lee K.-J."/>
            <person name="Kim Y.-J."/>
        </authorList>
    </citation>
    <scope>IDENTIFICATION BY MASS SPECTROMETRY</scope>
    <scope>IDENTIFICATION IN THE MEDIATOR COMPLEX</scope>
    <scope>FUNCTION OF THE MEDIATOR COMPLEX</scope>
</reference>